<reference key="1">
    <citation type="submission" date="2008-08" db="EMBL/GenBank/DDBJ databases">
        <title>The complete genome sequence of Coprothermobacter proteolyticus strain ATCC 5245 / DSM 5265 / BT.</title>
        <authorList>
            <person name="Dodson R.J."/>
            <person name="Durkin A.S."/>
            <person name="Wu M."/>
            <person name="Eisen J."/>
            <person name="Sutton G."/>
        </authorList>
    </citation>
    <scope>NUCLEOTIDE SEQUENCE [LARGE SCALE GENOMIC DNA]</scope>
    <source>
        <strain>ATCC 35245 / DSM 5265 / OCM 4 / BT</strain>
    </source>
</reference>
<sequence>MSRIGKKPVVVPKGVTVTIDGSTVTVKGPKGTLTRTFDPRIKISLIEDQIIVERTSEEKEVRALHGTTRALIQNMVTGVSEGFSVTLKIRGVGYRAELKGKDLQMSLGFSHPVVIQSIEGIQFQVPSADTVVVSGIDKQLVTQVAANIRRYRIPDAYKGKGIWYEGEQRPLKPGKAVGKGK</sequence>
<evidence type="ECO:0000255" key="1">
    <source>
        <dbReference type="HAMAP-Rule" id="MF_01365"/>
    </source>
</evidence>
<evidence type="ECO:0000305" key="2"/>
<feature type="chain" id="PRO_1000143967" description="Large ribosomal subunit protein uL6">
    <location>
        <begin position="1"/>
        <end position="181"/>
    </location>
</feature>
<accession>B5Y973</accession>
<name>RL6_COPPD</name>
<dbReference type="EMBL" id="CP001145">
    <property type="protein sequence ID" value="ACI17384.1"/>
    <property type="molecule type" value="Genomic_DNA"/>
</dbReference>
<dbReference type="RefSeq" id="WP_012544036.1">
    <property type="nucleotide sequence ID" value="NC_011295.1"/>
</dbReference>
<dbReference type="SMR" id="B5Y973"/>
<dbReference type="STRING" id="309798.COPRO5265_0998"/>
<dbReference type="KEGG" id="cpo:COPRO5265_0998"/>
<dbReference type="eggNOG" id="COG0097">
    <property type="taxonomic scope" value="Bacteria"/>
</dbReference>
<dbReference type="HOGENOM" id="CLU_065464_1_2_9"/>
<dbReference type="OrthoDB" id="9805007at2"/>
<dbReference type="Proteomes" id="UP000001732">
    <property type="component" value="Chromosome"/>
</dbReference>
<dbReference type="GO" id="GO:0022625">
    <property type="term" value="C:cytosolic large ribosomal subunit"/>
    <property type="evidence" value="ECO:0007669"/>
    <property type="project" value="TreeGrafter"/>
</dbReference>
<dbReference type="GO" id="GO:0019843">
    <property type="term" value="F:rRNA binding"/>
    <property type="evidence" value="ECO:0007669"/>
    <property type="project" value="UniProtKB-UniRule"/>
</dbReference>
<dbReference type="GO" id="GO:0003735">
    <property type="term" value="F:structural constituent of ribosome"/>
    <property type="evidence" value="ECO:0007669"/>
    <property type="project" value="InterPro"/>
</dbReference>
<dbReference type="GO" id="GO:0002181">
    <property type="term" value="P:cytoplasmic translation"/>
    <property type="evidence" value="ECO:0007669"/>
    <property type="project" value="TreeGrafter"/>
</dbReference>
<dbReference type="FunFam" id="3.90.930.12:FF:000001">
    <property type="entry name" value="50S ribosomal protein L6"/>
    <property type="match status" value="1"/>
</dbReference>
<dbReference type="FunFam" id="3.90.930.12:FF:000002">
    <property type="entry name" value="50S ribosomal protein L6"/>
    <property type="match status" value="1"/>
</dbReference>
<dbReference type="Gene3D" id="3.90.930.12">
    <property type="entry name" value="Ribosomal protein L6, alpha-beta domain"/>
    <property type="match status" value="2"/>
</dbReference>
<dbReference type="HAMAP" id="MF_01365_B">
    <property type="entry name" value="Ribosomal_uL6_B"/>
    <property type="match status" value="1"/>
</dbReference>
<dbReference type="InterPro" id="IPR000702">
    <property type="entry name" value="Ribosomal_uL6-like"/>
</dbReference>
<dbReference type="InterPro" id="IPR036789">
    <property type="entry name" value="Ribosomal_uL6-like_a/b-dom_sf"/>
</dbReference>
<dbReference type="InterPro" id="IPR020040">
    <property type="entry name" value="Ribosomal_uL6_a/b-dom"/>
</dbReference>
<dbReference type="InterPro" id="IPR019906">
    <property type="entry name" value="Ribosomal_uL6_bac-type"/>
</dbReference>
<dbReference type="InterPro" id="IPR002358">
    <property type="entry name" value="Ribosomal_uL6_CS"/>
</dbReference>
<dbReference type="NCBIfam" id="TIGR03654">
    <property type="entry name" value="L6_bact"/>
    <property type="match status" value="1"/>
</dbReference>
<dbReference type="PANTHER" id="PTHR11655">
    <property type="entry name" value="60S/50S RIBOSOMAL PROTEIN L6/L9"/>
    <property type="match status" value="1"/>
</dbReference>
<dbReference type="PANTHER" id="PTHR11655:SF14">
    <property type="entry name" value="LARGE RIBOSOMAL SUBUNIT PROTEIN UL6M"/>
    <property type="match status" value="1"/>
</dbReference>
<dbReference type="Pfam" id="PF00347">
    <property type="entry name" value="Ribosomal_L6"/>
    <property type="match status" value="2"/>
</dbReference>
<dbReference type="PIRSF" id="PIRSF002162">
    <property type="entry name" value="Ribosomal_L6"/>
    <property type="match status" value="1"/>
</dbReference>
<dbReference type="PRINTS" id="PR00059">
    <property type="entry name" value="RIBOSOMALL6"/>
</dbReference>
<dbReference type="SUPFAM" id="SSF56053">
    <property type="entry name" value="Ribosomal protein L6"/>
    <property type="match status" value="2"/>
</dbReference>
<dbReference type="PROSITE" id="PS00525">
    <property type="entry name" value="RIBOSOMAL_L6_1"/>
    <property type="match status" value="1"/>
</dbReference>
<gene>
    <name evidence="1" type="primary">rplF</name>
    <name type="ordered locus">COPRO5265_0998</name>
</gene>
<organism>
    <name type="scientific">Coprothermobacter proteolyticus (strain ATCC 35245 / DSM 5265 / OCM 4 / BT)</name>
    <dbReference type="NCBI Taxonomy" id="309798"/>
    <lineage>
        <taxon>Bacteria</taxon>
        <taxon>Pseudomonadati</taxon>
        <taxon>Coprothermobacterota</taxon>
        <taxon>Coprothermobacteria</taxon>
        <taxon>Coprothermobacterales</taxon>
        <taxon>Coprothermobacteraceae</taxon>
        <taxon>Coprothermobacter</taxon>
    </lineage>
</organism>
<protein>
    <recommendedName>
        <fullName evidence="1">Large ribosomal subunit protein uL6</fullName>
    </recommendedName>
    <alternativeName>
        <fullName evidence="2">50S ribosomal protein L6</fullName>
    </alternativeName>
</protein>
<proteinExistence type="inferred from homology"/>
<keyword id="KW-1185">Reference proteome</keyword>
<keyword id="KW-0687">Ribonucleoprotein</keyword>
<keyword id="KW-0689">Ribosomal protein</keyword>
<keyword id="KW-0694">RNA-binding</keyword>
<keyword id="KW-0699">rRNA-binding</keyword>
<comment type="function">
    <text evidence="1">This protein binds to the 23S rRNA, and is important in its secondary structure. It is located near the subunit interface in the base of the L7/L12 stalk, and near the tRNA binding site of the peptidyltransferase center.</text>
</comment>
<comment type="subunit">
    <text evidence="1">Part of the 50S ribosomal subunit.</text>
</comment>
<comment type="similarity">
    <text evidence="1">Belongs to the universal ribosomal protein uL6 family.</text>
</comment>